<protein>
    <recommendedName>
        <fullName>Citrate synthase</fullName>
        <ecNumber>2.3.3.16</ecNumber>
    </recommendedName>
</protein>
<gene>
    <name type="primary">gltA</name>
    <name type="ordered locus">blr4839</name>
</gene>
<name>CISY_BRADU</name>
<proteinExistence type="inferred from homology"/>
<accession>P94325</accession>
<sequence>MDAKASNKTATLTVGNKNYDLPIHSGSVGPDVIDIGKLYGQSGLFTYDPGFTSTASCQSKITYIDGDAGVLEYRGYPIEQLAENGDFLETCYLLLYGNLPTAAQKKDFDDRVIHHTMVHEQMARFFQGFRRDAHPMAVMVASVGALAAFYHDSTDINDPKQRMIASMRMIAKIPTLAAMAYKYTIGQPFVYPKNSLKFAENFLHMCFAVPCEEYKINPVLADALDKIFILHADHEQNASTSTVRIAGSSGANPFACIAAGIACLWGPAHGGANEAALAMLAEIGSVDKIPEFIAKVKDKNSEVRLMGFGHRVYKNYDPRAKIMQKMCHAVLKETGHGDDPMLKVAMELEKIALSDQYFIDRKLYPNVDFYSGITLKAMGFPVSMFTVLFAVARTVGWISQWSEMIEDPQQKIGRPRQLYTGVTRRDYVAIKDRK</sequence>
<dbReference type="EC" id="2.3.3.16"/>
<dbReference type="EMBL" id="U76375">
    <property type="protein sequence ID" value="AAB39736.1"/>
    <property type="molecule type" value="Genomic_DNA"/>
</dbReference>
<dbReference type="EMBL" id="BA000040">
    <property type="protein sequence ID" value="BAC50104.1"/>
    <property type="molecule type" value="Genomic_DNA"/>
</dbReference>
<dbReference type="RefSeq" id="NP_771479.1">
    <property type="nucleotide sequence ID" value="NC_004463.1"/>
</dbReference>
<dbReference type="RefSeq" id="WP_011087607.1">
    <property type="nucleotide sequence ID" value="NC_004463.1"/>
</dbReference>
<dbReference type="SMR" id="P94325"/>
<dbReference type="FunCoup" id="P94325">
    <property type="interactions" value="617"/>
</dbReference>
<dbReference type="STRING" id="224911.AAV28_21505"/>
<dbReference type="EnsemblBacteria" id="BAC50104">
    <property type="protein sequence ID" value="BAC50104"/>
    <property type="gene ID" value="BAC50104"/>
</dbReference>
<dbReference type="GeneID" id="46491842"/>
<dbReference type="KEGG" id="bja:blr4839"/>
<dbReference type="PATRIC" id="fig|224911.44.peg.4684"/>
<dbReference type="eggNOG" id="COG0372">
    <property type="taxonomic scope" value="Bacteria"/>
</dbReference>
<dbReference type="HOGENOM" id="CLU_025068_0_0_5"/>
<dbReference type="InParanoid" id="P94325"/>
<dbReference type="OrthoDB" id="9800864at2"/>
<dbReference type="PhylomeDB" id="P94325"/>
<dbReference type="UniPathway" id="UPA00223">
    <property type="reaction ID" value="UER00717"/>
</dbReference>
<dbReference type="Proteomes" id="UP000002526">
    <property type="component" value="Chromosome"/>
</dbReference>
<dbReference type="GO" id="GO:0005737">
    <property type="term" value="C:cytoplasm"/>
    <property type="evidence" value="ECO:0007669"/>
    <property type="project" value="InterPro"/>
</dbReference>
<dbReference type="GO" id="GO:0004108">
    <property type="term" value="F:citrate (Si)-synthase activity"/>
    <property type="evidence" value="ECO:0007669"/>
    <property type="project" value="InterPro"/>
</dbReference>
<dbReference type="GO" id="GO:0006099">
    <property type="term" value="P:tricarboxylic acid cycle"/>
    <property type="evidence" value="ECO:0007669"/>
    <property type="project" value="UniProtKB-UniPathway"/>
</dbReference>
<dbReference type="CDD" id="cd06114">
    <property type="entry name" value="EcCS_like"/>
    <property type="match status" value="1"/>
</dbReference>
<dbReference type="FunFam" id="1.10.230.10:FF:000002">
    <property type="entry name" value="Citrate synthase"/>
    <property type="match status" value="1"/>
</dbReference>
<dbReference type="Gene3D" id="2.20.28.60">
    <property type="match status" value="1"/>
</dbReference>
<dbReference type="Gene3D" id="1.10.580.10">
    <property type="entry name" value="Citrate Synthase, domain 1"/>
    <property type="match status" value="1"/>
</dbReference>
<dbReference type="Gene3D" id="1.10.230.10">
    <property type="entry name" value="Cytochrome P450-Terp, domain 2"/>
    <property type="match status" value="1"/>
</dbReference>
<dbReference type="InterPro" id="IPR016142">
    <property type="entry name" value="Citrate_synth-like_lrg_a-sub"/>
</dbReference>
<dbReference type="InterPro" id="IPR016143">
    <property type="entry name" value="Citrate_synth-like_sm_a-sub"/>
</dbReference>
<dbReference type="InterPro" id="IPR002020">
    <property type="entry name" value="Citrate_synthase"/>
</dbReference>
<dbReference type="InterPro" id="IPR019810">
    <property type="entry name" value="Citrate_synthase_AS"/>
</dbReference>
<dbReference type="InterPro" id="IPR024176">
    <property type="entry name" value="Citrate_synthase_bac-typ"/>
</dbReference>
<dbReference type="InterPro" id="IPR036969">
    <property type="entry name" value="Citrate_synthase_sf"/>
</dbReference>
<dbReference type="InterPro" id="IPR010953">
    <property type="entry name" value="Citrate_synthase_typ-I"/>
</dbReference>
<dbReference type="NCBIfam" id="TIGR01798">
    <property type="entry name" value="cit_synth_I"/>
    <property type="match status" value="1"/>
</dbReference>
<dbReference type="NCBIfam" id="NF004126">
    <property type="entry name" value="PRK05614.1"/>
    <property type="match status" value="1"/>
</dbReference>
<dbReference type="PANTHER" id="PTHR42871">
    <property type="entry name" value="CITRATE SYNTHASE"/>
    <property type="match status" value="1"/>
</dbReference>
<dbReference type="PANTHER" id="PTHR42871:SF1">
    <property type="entry name" value="CITRATE SYNTHASE"/>
    <property type="match status" value="1"/>
</dbReference>
<dbReference type="Pfam" id="PF00285">
    <property type="entry name" value="Citrate_synt"/>
    <property type="match status" value="1"/>
</dbReference>
<dbReference type="PIRSF" id="PIRSF001369">
    <property type="entry name" value="Citrate_synth"/>
    <property type="match status" value="1"/>
</dbReference>
<dbReference type="PRINTS" id="PR00143">
    <property type="entry name" value="CITRTSNTHASE"/>
</dbReference>
<dbReference type="SUPFAM" id="SSF48256">
    <property type="entry name" value="Citrate synthase"/>
    <property type="match status" value="1"/>
</dbReference>
<dbReference type="PROSITE" id="PS00480">
    <property type="entry name" value="CITRATE_SYNTHASE"/>
    <property type="match status" value="1"/>
</dbReference>
<reference key="1">
    <citation type="submission" date="1996-10" db="EMBL/GenBank/DDBJ databases">
        <title>Cloning of the Bradyrhizobium japonicum gltA gene encoding a central enzyme of the TCA cycle.</title>
        <authorList>
            <person name="Levier K."/>
            <person name="Guerinot M.L."/>
        </authorList>
    </citation>
    <scope>NUCLEOTIDE SEQUENCE [GENOMIC DNA]</scope>
    <source>
        <strain>61A152</strain>
    </source>
</reference>
<reference key="2">
    <citation type="journal article" date="2002" name="DNA Res.">
        <title>Complete genomic sequence of nitrogen-fixing symbiotic bacterium Bradyrhizobium japonicum USDA110.</title>
        <authorList>
            <person name="Kaneko T."/>
            <person name="Nakamura Y."/>
            <person name="Sato S."/>
            <person name="Minamisawa K."/>
            <person name="Uchiumi T."/>
            <person name="Sasamoto S."/>
            <person name="Watanabe A."/>
            <person name="Idesawa K."/>
            <person name="Iriguchi M."/>
            <person name="Kawashima K."/>
            <person name="Kohara M."/>
            <person name="Matsumoto M."/>
            <person name="Shimpo S."/>
            <person name="Tsuruoka H."/>
            <person name="Wada T."/>
            <person name="Yamada M."/>
            <person name="Tabata S."/>
        </authorList>
    </citation>
    <scope>NUCLEOTIDE SEQUENCE [LARGE SCALE GENOMIC DNA]</scope>
    <source>
        <strain>JCM 10833 / BCRC 13528 / IAM 13628 / NBRC 14792 / USDA 110</strain>
    </source>
</reference>
<comment type="catalytic activity">
    <reaction evidence="1">
        <text>oxaloacetate + acetyl-CoA + H2O = citrate + CoA + H(+)</text>
        <dbReference type="Rhea" id="RHEA:16845"/>
        <dbReference type="ChEBI" id="CHEBI:15377"/>
        <dbReference type="ChEBI" id="CHEBI:15378"/>
        <dbReference type="ChEBI" id="CHEBI:16452"/>
        <dbReference type="ChEBI" id="CHEBI:16947"/>
        <dbReference type="ChEBI" id="CHEBI:57287"/>
        <dbReference type="ChEBI" id="CHEBI:57288"/>
        <dbReference type="EC" id="2.3.3.16"/>
    </reaction>
</comment>
<comment type="pathway">
    <text>Carbohydrate metabolism; tricarboxylic acid cycle; isocitrate from oxaloacetate: step 1/2.</text>
</comment>
<comment type="similarity">
    <text evidence="2">Belongs to the citrate synthase family.</text>
</comment>
<evidence type="ECO:0000255" key="1">
    <source>
        <dbReference type="PROSITE-ProRule" id="PRU10117"/>
    </source>
</evidence>
<evidence type="ECO:0000305" key="2"/>
<organism>
    <name type="scientific">Bradyrhizobium diazoefficiens (strain JCM 10833 / BCRC 13528 / IAM 13628 / NBRC 14792 / USDA 110)</name>
    <dbReference type="NCBI Taxonomy" id="224911"/>
    <lineage>
        <taxon>Bacteria</taxon>
        <taxon>Pseudomonadati</taxon>
        <taxon>Pseudomonadota</taxon>
        <taxon>Alphaproteobacteria</taxon>
        <taxon>Hyphomicrobiales</taxon>
        <taxon>Nitrobacteraceae</taxon>
        <taxon>Bradyrhizobium</taxon>
    </lineage>
</organism>
<keyword id="KW-1185">Reference proteome</keyword>
<keyword id="KW-0808">Transferase</keyword>
<keyword id="KW-0816">Tricarboxylic acid cycle</keyword>
<feature type="chain" id="PRO_0000169939" description="Citrate synthase">
    <location>
        <begin position="1"/>
        <end position="434"/>
    </location>
</feature>
<feature type="active site" evidence="1">
    <location>
        <position position="310"/>
    </location>
</feature>
<feature type="active site" evidence="1">
    <location>
        <position position="368"/>
    </location>
</feature>
<feature type="sequence conflict" description="In Ref. 1; AAB39736." evidence="2" ref="1">
    <original>P</original>
    <variation>S</variation>
    <location>
        <position position="210"/>
    </location>
</feature>
<feature type="sequence conflict" description="In Ref. 1; AAB39736." evidence="2" ref="1">
    <original>A</original>
    <variation>G</variation>
    <location>
        <position position="281"/>
    </location>
</feature>
<feature type="sequence conflict" description="In Ref. 1; AAB39736." evidence="2" ref="1">
    <original>M</original>
    <variation>L</variation>
    <location>
        <position position="346"/>
    </location>
</feature>